<comment type="function">
    <text evidence="1">Is required not only for elongation of protein synthesis but also for the initiation of all mRNA translation through initiator tRNA(fMet) aminoacylation.</text>
</comment>
<comment type="catalytic activity">
    <reaction evidence="1">
        <text>tRNA(Met) + L-methionine + ATP = L-methionyl-tRNA(Met) + AMP + diphosphate</text>
        <dbReference type="Rhea" id="RHEA:13481"/>
        <dbReference type="Rhea" id="RHEA-COMP:9667"/>
        <dbReference type="Rhea" id="RHEA-COMP:9698"/>
        <dbReference type="ChEBI" id="CHEBI:30616"/>
        <dbReference type="ChEBI" id="CHEBI:33019"/>
        <dbReference type="ChEBI" id="CHEBI:57844"/>
        <dbReference type="ChEBI" id="CHEBI:78442"/>
        <dbReference type="ChEBI" id="CHEBI:78530"/>
        <dbReference type="ChEBI" id="CHEBI:456215"/>
        <dbReference type="EC" id="6.1.1.10"/>
    </reaction>
</comment>
<comment type="subunit">
    <text evidence="1">Homodimer.</text>
</comment>
<comment type="subcellular location">
    <subcellularLocation>
        <location evidence="1">Cytoplasm</location>
    </subcellularLocation>
</comment>
<comment type="similarity">
    <text evidence="1">Belongs to the class-I aminoacyl-tRNA synthetase family. MetG type 2B subfamily.</text>
</comment>
<protein>
    <recommendedName>
        <fullName evidence="1">Methionine--tRNA ligase</fullName>
        <ecNumber evidence="1">6.1.1.10</ecNumber>
    </recommendedName>
    <alternativeName>
        <fullName evidence="1">Methionyl-tRNA synthetase</fullName>
        <shortName evidence="1">MetRS</shortName>
    </alternativeName>
</protein>
<dbReference type="EC" id="6.1.1.10" evidence="1"/>
<dbReference type="EMBL" id="CP000046">
    <property type="protein sequence ID" value="AAW37652.1"/>
    <property type="molecule type" value="Genomic_DNA"/>
</dbReference>
<dbReference type="RefSeq" id="WP_001051127.1">
    <property type="nucleotide sequence ID" value="NZ_JBGOFO010000012.1"/>
</dbReference>
<dbReference type="PDB" id="7WPI">
    <property type="method" value="X-ray"/>
    <property type="resolution" value="1.92 A"/>
    <property type="chains" value="A=2-520"/>
</dbReference>
<dbReference type="PDB" id="7WPJ">
    <property type="method" value="X-ray"/>
    <property type="resolution" value="2.65 A"/>
    <property type="chains" value="A=2-520"/>
</dbReference>
<dbReference type="PDB" id="7WPK">
    <property type="method" value="X-ray"/>
    <property type="resolution" value="2.80 A"/>
    <property type="chains" value="A=2-520"/>
</dbReference>
<dbReference type="PDB" id="7WPL">
    <property type="method" value="X-ray"/>
    <property type="resolution" value="2.50 A"/>
    <property type="chains" value="A=2-520"/>
</dbReference>
<dbReference type="PDB" id="7WPM">
    <property type="method" value="X-ray"/>
    <property type="resolution" value="2.80 A"/>
    <property type="chains" value="A=2-520"/>
</dbReference>
<dbReference type="PDB" id="7WPN">
    <property type="method" value="X-ray"/>
    <property type="resolution" value="2.40 A"/>
    <property type="chains" value="A=2-520"/>
</dbReference>
<dbReference type="PDB" id="7WPT">
    <property type="method" value="X-ray"/>
    <property type="resolution" value="2.26 A"/>
    <property type="chains" value="A=2-520"/>
</dbReference>
<dbReference type="PDB" id="7WPX">
    <property type="method" value="X-ray"/>
    <property type="resolution" value="2.40 A"/>
    <property type="chains" value="A=2-520"/>
</dbReference>
<dbReference type="PDB" id="7WQ0">
    <property type="method" value="X-ray"/>
    <property type="resolution" value="2.09 A"/>
    <property type="chains" value="A=2-520"/>
</dbReference>
<dbReference type="PDBsum" id="7WPI"/>
<dbReference type="PDBsum" id="7WPJ"/>
<dbReference type="PDBsum" id="7WPK"/>
<dbReference type="PDBsum" id="7WPL"/>
<dbReference type="PDBsum" id="7WPM"/>
<dbReference type="PDBsum" id="7WPN"/>
<dbReference type="PDBsum" id="7WPT"/>
<dbReference type="PDBsum" id="7WPX"/>
<dbReference type="PDBsum" id="7WQ0"/>
<dbReference type="SMR" id="Q5HII6"/>
<dbReference type="KEGG" id="sac:SACOL0533"/>
<dbReference type="HOGENOM" id="CLU_009710_9_4_9"/>
<dbReference type="Proteomes" id="UP000000530">
    <property type="component" value="Chromosome"/>
</dbReference>
<dbReference type="GO" id="GO:0005737">
    <property type="term" value="C:cytoplasm"/>
    <property type="evidence" value="ECO:0007669"/>
    <property type="project" value="UniProtKB-SubCell"/>
</dbReference>
<dbReference type="GO" id="GO:0005524">
    <property type="term" value="F:ATP binding"/>
    <property type="evidence" value="ECO:0007669"/>
    <property type="project" value="UniProtKB-UniRule"/>
</dbReference>
<dbReference type="GO" id="GO:0004825">
    <property type="term" value="F:methionine-tRNA ligase activity"/>
    <property type="evidence" value="ECO:0007669"/>
    <property type="project" value="UniProtKB-UniRule"/>
</dbReference>
<dbReference type="GO" id="GO:0000049">
    <property type="term" value="F:tRNA binding"/>
    <property type="evidence" value="ECO:0007669"/>
    <property type="project" value="UniProtKB-KW"/>
</dbReference>
<dbReference type="GO" id="GO:0006431">
    <property type="term" value="P:methionyl-tRNA aminoacylation"/>
    <property type="evidence" value="ECO:0007669"/>
    <property type="project" value="UniProtKB-UniRule"/>
</dbReference>
<dbReference type="CDD" id="cd07957">
    <property type="entry name" value="Anticodon_Ia_Met"/>
    <property type="match status" value="1"/>
</dbReference>
<dbReference type="CDD" id="cd00814">
    <property type="entry name" value="MetRS_core"/>
    <property type="match status" value="1"/>
</dbReference>
<dbReference type="CDD" id="cd02800">
    <property type="entry name" value="tRNA_bind_EcMetRS_like"/>
    <property type="match status" value="1"/>
</dbReference>
<dbReference type="FunFam" id="1.10.730.10:FF:000026">
    <property type="entry name" value="Methionine--tRNA ligase"/>
    <property type="match status" value="1"/>
</dbReference>
<dbReference type="FunFam" id="2.170.220.10:FF:000002">
    <property type="entry name" value="Methionine--tRNA ligase"/>
    <property type="match status" value="1"/>
</dbReference>
<dbReference type="FunFam" id="2.40.50.140:FF:000042">
    <property type="entry name" value="Methionine--tRNA ligase"/>
    <property type="match status" value="1"/>
</dbReference>
<dbReference type="Gene3D" id="2.170.220.10">
    <property type="match status" value="1"/>
</dbReference>
<dbReference type="Gene3D" id="3.40.50.620">
    <property type="entry name" value="HUPs"/>
    <property type="match status" value="1"/>
</dbReference>
<dbReference type="Gene3D" id="1.10.730.10">
    <property type="entry name" value="Isoleucyl-tRNA Synthetase, Domain 1"/>
    <property type="match status" value="1"/>
</dbReference>
<dbReference type="Gene3D" id="2.40.50.140">
    <property type="entry name" value="Nucleic acid-binding proteins"/>
    <property type="match status" value="1"/>
</dbReference>
<dbReference type="HAMAP" id="MF_01228">
    <property type="entry name" value="Met_tRNA_synth_type2"/>
    <property type="match status" value="1"/>
</dbReference>
<dbReference type="InterPro" id="IPR001412">
    <property type="entry name" value="aa-tRNA-synth_I_CS"/>
</dbReference>
<dbReference type="InterPro" id="IPR041872">
    <property type="entry name" value="Anticodon_Met"/>
</dbReference>
<dbReference type="InterPro" id="IPR013155">
    <property type="entry name" value="M/V/L/I-tRNA-synth_anticd-bd"/>
</dbReference>
<dbReference type="InterPro" id="IPR004495">
    <property type="entry name" value="Met-tRNA-synth_bsu_C"/>
</dbReference>
<dbReference type="InterPro" id="IPR014758">
    <property type="entry name" value="Met-tRNA_synth"/>
</dbReference>
<dbReference type="InterPro" id="IPR023457">
    <property type="entry name" value="Met-tRNA_synth_2"/>
</dbReference>
<dbReference type="InterPro" id="IPR015413">
    <property type="entry name" value="Methionyl/Leucyl_tRNA_Synth"/>
</dbReference>
<dbReference type="InterPro" id="IPR033911">
    <property type="entry name" value="MetRS_core"/>
</dbReference>
<dbReference type="InterPro" id="IPR012340">
    <property type="entry name" value="NA-bd_OB-fold"/>
</dbReference>
<dbReference type="InterPro" id="IPR014729">
    <property type="entry name" value="Rossmann-like_a/b/a_fold"/>
</dbReference>
<dbReference type="InterPro" id="IPR002547">
    <property type="entry name" value="tRNA-bd_dom"/>
</dbReference>
<dbReference type="InterPro" id="IPR009080">
    <property type="entry name" value="tRNAsynth_Ia_anticodon-bd"/>
</dbReference>
<dbReference type="NCBIfam" id="TIGR00398">
    <property type="entry name" value="metG"/>
    <property type="match status" value="1"/>
</dbReference>
<dbReference type="NCBIfam" id="TIGR00399">
    <property type="entry name" value="metG_C_term"/>
    <property type="match status" value="1"/>
</dbReference>
<dbReference type="NCBIfam" id="NF008900">
    <property type="entry name" value="PRK12267.1"/>
    <property type="match status" value="1"/>
</dbReference>
<dbReference type="PANTHER" id="PTHR43326:SF1">
    <property type="entry name" value="METHIONINE--TRNA LIGASE, MITOCHONDRIAL"/>
    <property type="match status" value="1"/>
</dbReference>
<dbReference type="PANTHER" id="PTHR43326">
    <property type="entry name" value="METHIONYL-TRNA SYNTHETASE"/>
    <property type="match status" value="1"/>
</dbReference>
<dbReference type="Pfam" id="PF08264">
    <property type="entry name" value="Anticodon_1"/>
    <property type="match status" value="1"/>
</dbReference>
<dbReference type="Pfam" id="PF09334">
    <property type="entry name" value="tRNA-synt_1g"/>
    <property type="match status" value="1"/>
</dbReference>
<dbReference type="Pfam" id="PF01588">
    <property type="entry name" value="tRNA_bind"/>
    <property type="match status" value="1"/>
</dbReference>
<dbReference type="PRINTS" id="PR01041">
    <property type="entry name" value="TRNASYNTHMET"/>
</dbReference>
<dbReference type="SUPFAM" id="SSF47323">
    <property type="entry name" value="Anticodon-binding domain of a subclass of class I aminoacyl-tRNA synthetases"/>
    <property type="match status" value="1"/>
</dbReference>
<dbReference type="SUPFAM" id="SSF50249">
    <property type="entry name" value="Nucleic acid-binding proteins"/>
    <property type="match status" value="1"/>
</dbReference>
<dbReference type="SUPFAM" id="SSF52374">
    <property type="entry name" value="Nucleotidylyl transferase"/>
    <property type="match status" value="1"/>
</dbReference>
<dbReference type="PROSITE" id="PS00178">
    <property type="entry name" value="AA_TRNA_LIGASE_I"/>
    <property type="match status" value="1"/>
</dbReference>
<dbReference type="PROSITE" id="PS50886">
    <property type="entry name" value="TRBD"/>
    <property type="match status" value="1"/>
</dbReference>
<sequence length="657" mass="74886">MAKETFYITTPIYYPSGNLHIGHAYSTVAGDVIARYKRMQGYDVRYLTGTDEHGQKIQEKAQKAGKTEIEYLDEMIAGIKQLWAKLEISNDDFIRTTEERHKHVVEQVFERLLKQGDIYLGEYEGWYSVPDETYYTESQLVDPQYENGKIIGGKSPDSGHEVELVKEESYFFNISKYTDRLLEFYDQNPDFIQPPSRKNEMINNFIKPGLADLAVSRTSFNWGVHVPSNPKHVVYVWIDALVNYISALGYLSDDESLFNKYWPADIHLMAKEIVRFHSIIWPILLMALDLPLPKKVFAHGWILMKDGKMSKSKGNVVDPNILIDRYGLDATRYYLMRELPFGSDGVFTPEAFVERTNFDLANDLGNLVNRTISMVNKYFDGELPAYQGPLHELDEEMEAMALETVKSYTESMESLQFSVALSTVWKFISRTNKYIDETTPWVLAKDDSQKDMLGNVMAHLVENIRYAAVLLRPFLTHAPKEIFEQLNINNPQFMEFSSLEQYGVLNESIMVTGQPKPIFPRLDSEAEIAYIKESMQPPATKEEKEEIPSKPQIDIKDFDKVEIKAATIIDAEHVKKSDKLLKIQVDLDSEQRQIVSGIAKFYTPDDIIGKKVAVVTNLKPAKLMGQKSEGMILSAEKDGVLTLVSLPSAIPNGAVIK</sequence>
<proteinExistence type="evidence at protein level"/>
<accession>Q5HII6</accession>
<gene>
    <name evidence="1" type="primary">metG</name>
    <name type="ordered locus">SACOL0533</name>
</gene>
<reference key="1">
    <citation type="journal article" date="2005" name="J. Bacteriol.">
        <title>Insights on evolution of virulence and resistance from the complete genome analysis of an early methicillin-resistant Staphylococcus aureus strain and a biofilm-producing methicillin-resistant Staphylococcus epidermidis strain.</title>
        <authorList>
            <person name="Gill S.R."/>
            <person name="Fouts D.E."/>
            <person name="Archer G.L."/>
            <person name="Mongodin E.F."/>
            <person name="DeBoy R.T."/>
            <person name="Ravel J."/>
            <person name="Paulsen I.T."/>
            <person name="Kolonay J.F."/>
            <person name="Brinkac L.M."/>
            <person name="Beanan M.J."/>
            <person name="Dodson R.J."/>
            <person name="Daugherty S.C."/>
            <person name="Madupu R."/>
            <person name="Angiuoli S.V."/>
            <person name="Durkin A.S."/>
            <person name="Haft D.H."/>
            <person name="Vamathevan J.J."/>
            <person name="Khouri H."/>
            <person name="Utterback T.R."/>
            <person name="Lee C."/>
            <person name="Dimitrov G."/>
            <person name="Jiang L."/>
            <person name="Qin H."/>
            <person name="Weidman J."/>
            <person name="Tran K."/>
            <person name="Kang K.H."/>
            <person name="Hance I.R."/>
            <person name="Nelson K.E."/>
            <person name="Fraser C.M."/>
        </authorList>
    </citation>
    <scope>NUCLEOTIDE SEQUENCE [LARGE SCALE GENOMIC DNA]</scope>
    <source>
        <strain>COL</strain>
    </source>
</reference>
<name>SYM_STAAC</name>
<keyword id="KW-0002">3D-structure</keyword>
<keyword id="KW-0030">Aminoacyl-tRNA synthetase</keyword>
<keyword id="KW-0067">ATP-binding</keyword>
<keyword id="KW-0963">Cytoplasm</keyword>
<keyword id="KW-0436">Ligase</keyword>
<keyword id="KW-0547">Nucleotide-binding</keyword>
<keyword id="KW-0648">Protein biosynthesis</keyword>
<keyword id="KW-0694">RNA-binding</keyword>
<keyword id="KW-0820">tRNA-binding</keyword>
<organism>
    <name type="scientific">Staphylococcus aureus (strain COL)</name>
    <dbReference type="NCBI Taxonomy" id="93062"/>
    <lineage>
        <taxon>Bacteria</taxon>
        <taxon>Bacillati</taxon>
        <taxon>Bacillota</taxon>
        <taxon>Bacilli</taxon>
        <taxon>Bacillales</taxon>
        <taxon>Staphylococcaceae</taxon>
        <taxon>Staphylococcus</taxon>
    </lineage>
</organism>
<feature type="chain" id="PRO_0000139239" description="Methionine--tRNA ligase">
    <location>
        <begin position="1"/>
        <end position="657"/>
    </location>
</feature>
<feature type="domain" description="tRNA-binding" evidence="1">
    <location>
        <begin position="557"/>
        <end position="657"/>
    </location>
</feature>
<feature type="short sequence motif" description="'HIGH' region">
    <location>
        <begin position="13"/>
        <end position="23"/>
    </location>
</feature>
<feature type="short sequence motif" description="'KMSKS' region">
    <location>
        <begin position="308"/>
        <end position="312"/>
    </location>
</feature>
<feature type="binding site" evidence="1">
    <location>
        <position position="311"/>
    </location>
    <ligand>
        <name>ATP</name>
        <dbReference type="ChEBI" id="CHEBI:30616"/>
    </ligand>
</feature>
<feature type="strand" evidence="2">
    <location>
        <begin position="5"/>
        <end position="9"/>
    </location>
</feature>
<feature type="helix" evidence="2">
    <location>
        <begin position="21"/>
        <end position="39"/>
    </location>
</feature>
<feature type="strand" evidence="2">
    <location>
        <begin position="43"/>
        <end position="50"/>
    </location>
</feature>
<feature type="helix" evidence="2">
    <location>
        <begin position="55"/>
        <end position="63"/>
    </location>
</feature>
<feature type="helix" evidence="2">
    <location>
        <begin position="68"/>
        <end position="85"/>
    </location>
</feature>
<feature type="strand" evidence="2">
    <location>
        <begin position="91"/>
        <end position="95"/>
    </location>
</feature>
<feature type="helix" evidence="2">
    <location>
        <begin position="99"/>
        <end position="114"/>
    </location>
</feature>
<feature type="strand" evidence="2">
    <location>
        <begin position="117"/>
        <end position="128"/>
    </location>
</feature>
<feature type="turn" evidence="2">
    <location>
        <begin position="129"/>
        <end position="132"/>
    </location>
</feature>
<feature type="strand" evidence="2">
    <location>
        <begin position="133"/>
        <end position="135"/>
    </location>
</feature>
<feature type="helix" evidence="2">
    <location>
        <begin position="137"/>
        <end position="139"/>
    </location>
</feature>
<feature type="strand" evidence="2">
    <location>
        <begin position="141"/>
        <end position="146"/>
    </location>
</feature>
<feature type="strand" evidence="2">
    <location>
        <begin position="149"/>
        <end position="154"/>
    </location>
</feature>
<feature type="turn" evidence="2">
    <location>
        <begin position="156"/>
        <end position="158"/>
    </location>
</feature>
<feature type="strand" evidence="2">
    <location>
        <begin position="163"/>
        <end position="172"/>
    </location>
</feature>
<feature type="helix" evidence="2">
    <location>
        <begin position="175"/>
        <end position="177"/>
    </location>
</feature>
<feature type="helix" evidence="2">
    <location>
        <begin position="178"/>
        <end position="187"/>
    </location>
</feature>
<feature type="strand" evidence="2">
    <location>
        <begin position="191"/>
        <end position="194"/>
    </location>
</feature>
<feature type="helix" evidence="2">
    <location>
        <begin position="197"/>
        <end position="204"/>
    </location>
</feature>
<feature type="turn" evidence="2">
    <location>
        <begin position="205"/>
        <end position="208"/>
    </location>
</feature>
<feature type="strand" evidence="2">
    <location>
        <begin position="216"/>
        <end position="219"/>
    </location>
</feature>
<feature type="strand" evidence="2">
    <location>
        <begin position="229"/>
        <end position="234"/>
    </location>
</feature>
<feature type="helix" evidence="2">
    <location>
        <begin position="236"/>
        <end position="241"/>
    </location>
</feature>
<feature type="helix" evidence="2">
    <location>
        <begin position="243"/>
        <end position="246"/>
    </location>
</feature>
<feature type="turn" evidence="2">
    <location>
        <begin position="247"/>
        <end position="251"/>
    </location>
</feature>
<feature type="helix" evidence="2">
    <location>
        <begin position="256"/>
        <end position="261"/>
    </location>
</feature>
<feature type="strand" evidence="2">
    <location>
        <begin position="265"/>
        <end position="270"/>
    </location>
</feature>
<feature type="helix" evidence="2">
    <location>
        <begin position="271"/>
        <end position="273"/>
    </location>
</feature>
<feature type="helix" evidence="2">
    <location>
        <begin position="274"/>
        <end position="278"/>
    </location>
</feature>
<feature type="helix" evidence="2">
    <location>
        <begin position="280"/>
        <end position="287"/>
    </location>
</feature>
<feature type="strand" evidence="2">
    <location>
        <begin position="296"/>
        <end position="299"/>
    </location>
</feature>
<feature type="strand" evidence="3">
    <location>
        <begin position="302"/>
        <end position="304"/>
    </location>
</feature>
<feature type="strand" evidence="2">
    <location>
        <begin position="305"/>
        <end position="308"/>
    </location>
</feature>
<feature type="helix" evidence="2">
    <location>
        <begin position="311"/>
        <end position="313"/>
    </location>
</feature>
<feature type="helix" evidence="2">
    <location>
        <begin position="319"/>
        <end position="326"/>
    </location>
</feature>
<feature type="helix" evidence="2">
    <location>
        <begin position="328"/>
        <end position="338"/>
    </location>
</feature>
<feature type="helix" evidence="2">
    <location>
        <begin position="349"/>
        <end position="358"/>
    </location>
</feature>
<feature type="turn" evidence="2">
    <location>
        <begin position="359"/>
        <end position="362"/>
    </location>
</feature>
<feature type="helix" evidence="2">
    <location>
        <begin position="363"/>
        <end position="379"/>
    </location>
</feature>
<feature type="helix" evidence="2">
    <location>
        <begin position="394"/>
        <end position="413"/>
    </location>
</feature>
<feature type="helix" evidence="2">
    <location>
        <begin position="417"/>
        <end position="438"/>
    </location>
</feature>
<feature type="helix" evidence="2">
    <location>
        <begin position="440"/>
        <end position="443"/>
    </location>
</feature>
<feature type="helix" evidence="3">
    <location>
        <begin position="447"/>
        <end position="449"/>
    </location>
</feature>
<feature type="helix" evidence="2">
    <location>
        <begin position="450"/>
        <end position="470"/>
    </location>
</feature>
<feature type="turn" evidence="2">
    <location>
        <begin position="471"/>
        <end position="474"/>
    </location>
</feature>
<feature type="helix" evidence="2">
    <location>
        <begin position="478"/>
        <end position="486"/>
    </location>
</feature>
<feature type="helix" evidence="2">
    <location>
        <begin position="491"/>
        <end position="494"/>
    </location>
</feature>
<feature type="helix" evidence="2">
    <location>
        <begin position="496"/>
        <end position="499"/>
    </location>
</feature>
<feature type="strand" evidence="2">
    <location>
        <begin position="500"/>
        <end position="502"/>
    </location>
</feature>
<evidence type="ECO:0000255" key="1">
    <source>
        <dbReference type="HAMAP-Rule" id="MF_01228"/>
    </source>
</evidence>
<evidence type="ECO:0007829" key="2">
    <source>
        <dbReference type="PDB" id="7WPI"/>
    </source>
</evidence>
<evidence type="ECO:0007829" key="3">
    <source>
        <dbReference type="PDB" id="7WQ0"/>
    </source>
</evidence>